<comment type="function">
    <text evidence="1">Catalyzes the synthesis of the hydroxymethylpyrimidine phosphate (HMP-P) moiety of thiamine from aminoimidazole ribotide (AIR) in a radical S-adenosyl-L-methionine (SAM)-dependent reaction.</text>
</comment>
<comment type="catalytic activity">
    <reaction evidence="1">
        <text>5-amino-1-(5-phospho-beta-D-ribosyl)imidazole + S-adenosyl-L-methionine = 4-amino-2-methyl-5-(phosphooxymethyl)pyrimidine + CO + 5'-deoxyadenosine + formate + L-methionine + 3 H(+)</text>
        <dbReference type="Rhea" id="RHEA:24840"/>
        <dbReference type="ChEBI" id="CHEBI:15378"/>
        <dbReference type="ChEBI" id="CHEBI:15740"/>
        <dbReference type="ChEBI" id="CHEBI:17245"/>
        <dbReference type="ChEBI" id="CHEBI:17319"/>
        <dbReference type="ChEBI" id="CHEBI:57844"/>
        <dbReference type="ChEBI" id="CHEBI:58354"/>
        <dbReference type="ChEBI" id="CHEBI:59789"/>
        <dbReference type="ChEBI" id="CHEBI:137981"/>
        <dbReference type="EC" id="4.1.99.17"/>
    </reaction>
</comment>
<comment type="cofactor">
    <cofactor evidence="1">
        <name>[4Fe-4S] cluster</name>
        <dbReference type="ChEBI" id="CHEBI:49883"/>
    </cofactor>
    <text evidence="1">Binds 1 [4Fe-4S] cluster per subunit. The cluster is coordinated with 3 cysteines and an exchangeable S-adenosyl-L-methionine.</text>
</comment>
<comment type="pathway">
    <text evidence="1">Cofactor biosynthesis; thiamine diphosphate biosynthesis.</text>
</comment>
<comment type="similarity">
    <text evidence="1">Belongs to the ThiC family.</text>
</comment>
<sequence>MRSSWIKPRLGKDNVTQINFARNGYITEEMDFVAKKENLPASLIMEEVARGRLIIPANINHLNLEPMSIGIASRCKVNANIGASPNASDINEEVEKLKLAVKYGADTVMDLSTGGVNLDEVRKAIIHESPVPIGTVPVYQALESVHGSIDRLTEDDFLHIIEKHCQQGVDYQTIHAGLLIEHLPKVKGRITGIVSRGGGILAQWMLHHFKQNPLYTRFDDICEIFKKYDCTFSLGDSLRPGCLHDASDDAQLAELKTLGELTRRAWEHNVQVMVEGPGHVPMDQIEFNVRKQMEECSEAPFYVLGPLVTDISPGYDHISSAIGAAMAGWYGTSMLCYVTPKEHLGLPNAEDVREGLIAYKIAAHAADIARHRAGARDRDDELSHARYNFDWNKQFELSLDPERAKQYHDETLPEEIFKKAEFCSMCGPKHCPMNSKISDESLDQLKDKLEECNSSV</sequence>
<evidence type="ECO:0000255" key="1">
    <source>
        <dbReference type="HAMAP-Rule" id="MF_00089"/>
    </source>
</evidence>
<protein>
    <recommendedName>
        <fullName evidence="1">Phosphomethylpyrimidine synthase</fullName>
        <ecNumber evidence="1">4.1.99.17</ecNumber>
    </recommendedName>
    <alternativeName>
        <fullName evidence="1">Hydroxymethylpyrimidine phosphate synthase</fullName>
        <shortName evidence="1">HMP-P synthase</shortName>
        <shortName evidence="1">HMP-phosphate synthase</shortName>
        <shortName evidence="1">HMPP synthase</shortName>
    </alternativeName>
    <alternativeName>
        <fullName evidence="1">Thiamine biosynthesis protein ThiC</fullName>
    </alternativeName>
</protein>
<proteinExistence type="inferred from homology"/>
<organism>
    <name type="scientific">Prochlorococcus marinus (strain MIT 9312)</name>
    <dbReference type="NCBI Taxonomy" id="74546"/>
    <lineage>
        <taxon>Bacteria</taxon>
        <taxon>Bacillati</taxon>
        <taxon>Cyanobacteriota</taxon>
        <taxon>Cyanophyceae</taxon>
        <taxon>Synechococcales</taxon>
        <taxon>Prochlorococcaceae</taxon>
        <taxon>Prochlorococcus</taxon>
    </lineage>
</organism>
<dbReference type="EC" id="4.1.99.17" evidence="1"/>
<dbReference type="EMBL" id="CP000111">
    <property type="protein sequence ID" value="ABB50765.1"/>
    <property type="molecule type" value="Genomic_DNA"/>
</dbReference>
<dbReference type="RefSeq" id="WP_011377246.1">
    <property type="nucleotide sequence ID" value="NC_007577.1"/>
</dbReference>
<dbReference type="SMR" id="Q318D0"/>
<dbReference type="STRING" id="74546.PMT9312_1704"/>
<dbReference type="KEGG" id="pmi:PMT9312_1704"/>
<dbReference type="eggNOG" id="COG0422">
    <property type="taxonomic scope" value="Bacteria"/>
</dbReference>
<dbReference type="HOGENOM" id="CLU_013181_2_1_3"/>
<dbReference type="OrthoDB" id="9805897at2"/>
<dbReference type="UniPathway" id="UPA00060"/>
<dbReference type="Proteomes" id="UP000002715">
    <property type="component" value="Chromosome"/>
</dbReference>
<dbReference type="GO" id="GO:0005829">
    <property type="term" value="C:cytosol"/>
    <property type="evidence" value="ECO:0007669"/>
    <property type="project" value="TreeGrafter"/>
</dbReference>
<dbReference type="GO" id="GO:0051539">
    <property type="term" value="F:4 iron, 4 sulfur cluster binding"/>
    <property type="evidence" value="ECO:0007669"/>
    <property type="project" value="UniProtKB-KW"/>
</dbReference>
<dbReference type="GO" id="GO:0016830">
    <property type="term" value="F:carbon-carbon lyase activity"/>
    <property type="evidence" value="ECO:0007669"/>
    <property type="project" value="InterPro"/>
</dbReference>
<dbReference type="GO" id="GO:0008270">
    <property type="term" value="F:zinc ion binding"/>
    <property type="evidence" value="ECO:0007669"/>
    <property type="project" value="UniProtKB-UniRule"/>
</dbReference>
<dbReference type="GO" id="GO:0009228">
    <property type="term" value="P:thiamine biosynthetic process"/>
    <property type="evidence" value="ECO:0007669"/>
    <property type="project" value="UniProtKB-KW"/>
</dbReference>
<dbReference type="GO" id="GO:0009229">
    <property type="term" value="P:thiamine diphosphate biosynthetic process"/>
    <property type="evidence" value="ECO:0007669"/>
    <property type="project" value="UniProtKB-UniRule"/>
</dbReference>
<dbReference type="FunFam" id="3.20.20.540:FF:000001">
    <property type="entry name" value="Phosphomethylpyrimidine synthase"/>
    <property type="match status" value="1"/>
</dbReference>
<dbReference type="Gene3D" id="6.10.250.620">
    <property type="match status" value="1"/>
</dbReference>
<dbReference type="Gene3D" id="3.20.20.540">
    <property type="entry name" value="Radical SAM ThiC family, central domain"/>
    <property type="match status" value="1"/>
</dbReference>
<dbReference type="HAMAP" id="MF_00089">
    <property type="entry name" value="ThiC"/>
    <property type="match status" value="1"/>
</dbReference>
<dbReference type="InterPro" id="IPR037509">
    <property type="entry name" value="ThiC"/>
</dbReference>
<dbReference type="InterPro" id="IPR038521">
    <property type="entry name" value="ThiC/Bza_core_dom"/>
</dbReference>
<dbReference type="InterPro" id="IPR002817">
    <property type="entry name" value="ThiC/BzaA/B"/>
</dbReference>
<dbReference type="NCBIfam" id="NF006763">
    <property type="entry name" value="PRK09284.1"/>
    <property type="match status" value="1"/>
</dbReference>
<dbReference type="NCBIfam" id="NF009895">
    <property type="entry name" value="PRK13352.1"/>
    <property type="match status" value="1"/>
</dbReference>
<dbReference type="NCBIfam" id="TIGR00190">
    <property type="entry name" value="thiC"/>
    <property type="match status" value="1"/>
</dbReference>
<dbReference type="PANTHER" id="PTHR30557:SF1">
    <property type="entry name" value="PHOSPHOMETHYLPYRIMIDINE SYNTHASE, CHLOROPLASTIC"/>
    <property type="match status" value="1"/>
</dbReference>
<dbReference type="PANTHER" id="PTHR30557">
    <property type="entry name" value="THIAMINE BIOSYNTHESIS PROTEIN THIC"/>
    <property type="match status" value="1"/>
</dbReference>
<dbReference type="Pfam" id="PF01964">
    <property type="entry name" value="ThiC_Rad_SAM"/>
    <property type="match status" value="1"/>
</dbReference>
<dbReference type="SFLD" id="SFLDF00407">
    <property type="entry name" value="phosphomethylpyrimidine_syntha"/>
    <property type="match status" value="1"/>
</dbReference>
<dbReference type="SFLD" id="SFLDG01114">
    <property type="entry name" value="phosphomethylpyrimidine_syntha"/>
    <property type="match status" value="1"/>
</dbReference>
<dbReference type="SFLD" id="SFLDS00113">
    <property type="entry name" value="Radical_SAM_Phosphomethylpyrim"/>
    <property type="match status" value="1"/>
</dbReference>
<name>THIC_PROM9</name>
<accession>Q318D0</accession>
<keyword id="KW-0004">4Fe-4S</keyword>
<keyword id="KW-0408">Iron</keyword>
<keyword id="KW-0411">Iron-sulfur</keyword>
<keyword id="KW-0456">Lyase</keyword>
<keyword id="KW-0479">Metal-binding</keyword>
<keyword id="KW-0949">S-adenosyl-L-methionine</keyword>
<keyword id="KW-0784">Thiamine biosynthesis</keyword>
<keyword id="KW-0862">Zinc</keyword>
<reference key="1">
    <citation type="journal article" date="2006" name="Science">
        <title>Genomic islands and the ecology and evolution of Prochlorococcus.</title>
        <authorList>
            <person name="Coleman M.L."/>
            <person name="Sullivan M.B."/>
            <person name="Martiny A.C."/>
            <person name="Steglich C."/>
            <person name="Barry K."/>
            <person name="Delong E.F."/>
            <person name="Chisholm S.W."/>
        </authorList>
    </citation>
    <scope>NUCLEOTIDE SEQUENCE [LARGE SCALE GENOMIC DNA]</scope>
    <source>
        <strain>MIT 9312</strain>
    </source>
</reference>
<feature type="chain" id="PRO_1000004790" description="Phosphomethylpyrimidine synthase">
    <location>
        <begin position="1"/>
        <end position="456"/>
    </location>
</feature>
<feature type="binding site" evidence="1">
    <location>
        <position position="80"/>
    </location>
    <ligand>
        <name>substrate</name>
    </ligand>
</feature>
<feature type="binding site" evidence="1">
    <location>
        <position position="109"/>
    </location>
    <ligand>
        <name>substrate</name>
    </ligand>
</feature>
<feature type="binding site" evidence="1">
    <location>
        <position position="139"/>
    </location>
    <ligand>
        <name>substrate</name>
    </ligand>
</feature>
<feature type="binding site" evidence="1">
    <location>
        <position position="175"/>
    </location>
    <ligand>
        <name>substrate</name>
    </ligand>
</feature>
<feature type="binding site" evidence="1">
    <location>
        <begin position="195"/>
        <end position="197"/>
    </location>
    <ligand>
        <name>substrate</name>
    </ligand>
</feature>
<feature type="binding site" evidence="1">
    <location>
        <begin position="236"/>
        <end position="239"/>
    </location>
    <ligand>
        <name>substrate</name>
    </ligand>
</feature>
<feature type="binding site" evidence="1">
    <location>
        <position position="275"/>
    </location>
    <ligand>
        <name>substrate</name>
    </ligand>
</feature>
<feature type="binding site" evidence="1">
    <location>
        <position position="279"/>
    </location>
    <ligand>
        <name>Zn(2+)</name>
        <dbReference type="ChEBI" id="CHEBI:29105"/>
    </ligand>
</feature>
<feature type="binding site" evidence="1">
    <location>
        <position position="302"/>
    </location>
    <ligand>
        <name>substrate</name>
    </ligand>
</feature>
<feature type="binding site" evidence="1">
    <location>
        <position position="343"/>
    </location>
    <ligand>
        <name>Zn(2+)</name>
        <dbReference type="ChEBI" id="CHEBI:29105"/>
    </ligand>
</feature>
<feature type="binding site" evidence="1">
    <location>
        <position position="423"/>
    </location>
    <ligand>
        <name>[4Fe-4S] cluster</name>
        <dbReference type="ChEBI" id="CHEBI:49883"/>
        <note>4Fe-4S-S-AdoMet</note>
    </ligand>
</feature>
<feature type="binding site" evidence="1">
    <location>
        <position position="426"/>
    </location>
    <ligand>
        <name>[4Fe-4S] cluster</name>
        <dbReference type="ChEBI" id="CHEBI:49883"/>
        <note>4Fe-4S-S-AdoMet</note>
    </ligand>
</feature>
<feature type="binding site" evidence="1">
    <location>
        <position position="431"/>
    </location>
    <ligand>
        <name>[4Fe-4S] cluster</name>
        <dbReference type="ChEBI" id="CHEBI:49883"/>
        <note>4Fe-4S-S-AdoMet</note>
    </ligand>
</feature>
<gene>
    <name evidence="1" type="primary">thiC</name>
    <name type="ordered locus">PMT9312_1704</name>
</gene>